<protein>
    <recommendedName>
        <fullName evidence="1">Ascorbate-specific PTS system EIIA component</fullName>
    </recommendedName>
    <alternativeName>
        <fullName evidence="1">Ascorbate-specific phosphotransferase enzyme IIA component</fullName>
    </alternativeName>
</protein>
<dbReference type="EMBL" id="AE017220">
    <property type="protein sequence ID" value="AAX68165.1"/>
    <property type="molecule type" value="Genomic_DNA"/>
</dbReference>
<dbReference type="RefSeq" id="WP_000776531.1">
    <property type="nucleotide sequence ID" value="NC_006905.1"/>
</dbReference>
<dbReference type="SMR" id="Q57GJ7"/>
<dbReference type="KEGG" id="sec:SCH_4259"/>
<dbReference type="HOGENOM" id="CLU_072531_2_0_6"/>
<dbReference type="Proteomes" id="UP000000538">
    <property type="component" value="Chromosome"/>
</dbReference>
<dbReference type="GO" id="GO:0005737">
    <property type="term" value="C:cytoplasm"/>
    <property type="evidence" value="ECO:0007669"/>
    <property type="project" value="UniProtKB-SubCell"/>
</dbReference>
<dbReference type="GO" id="GO:0016301">
    <property type="term" value="F:kinase activity"/>
    <property type="evidence" value="ECO:0007669"/>
    <property type="project" value="UniProtKB-KW"/>
</dbReference>
<dbReference type="GO" id="GO:0009401">
    <property type="term" value="P:phosphoenolpyruvate-dependent sugar phosphotransferase system"/>
    <property type="evidence" value="ECO:0007669"/>
    <property type="project" value="UniProtKB-KW"/>
</dbReference>
<dbReference type="CDD" id="cd00211">
    <property type="entry name" value="PTS_IIA_fru"/>
    <property type="match status" value="1"/>
</dbReference>
<dbReference type="FunFam" id="3.40.930.10:FF:000005">
    <property type="entry name" value="Ascorbate-specific phosphotransferase enzyme IIA component"/>
    <property type="match status" value="1"/>
</dbReference>
<dbReference type="Gene3D" id="3.40.930.10">
    <property type="entry name" value="Mannitol-specific EII, Chain A"/>
    <property type="match status" value="1"/>
</dbReference>
<dbReference type="InterPro" id="IPR051351">
    <property type="entry name" value="Ascorbate-PTS_EIIA_comp"/>
</dbReference>
<dbReference type="InterPro" id="IPR016152">
    <property type="entry name" value="PTrfase/Anion_transptr"/>
</dbReference>
<dbReference type="InterPro" id="IPR002178">
    <property type="entry name" value="PTS_EIIA_type-2_dom"/>
</dbReference>
<dbReference type="NCBIfam" id="NF007694">
    <property type="entry name" value="PRK10372.1"/>
    <property type="match status" value="1"/>
</dbReference>
<dbReference type="PANTHER" id="PTHR36203">
    <property type="entry name" value="ASCORBATE-SPECIFIC PTS SYSTEM EIIA COMPONENT"/>
    <property type="match status" value="1"/>
</dbReference>
<dbReference type="PANTHER" id="PTHR36203:SF1">
    <property type="entry name" value="ASCORBATE-SPECIFIC PTS SYSTEM EIIA COMPONENT"/>
    <property type="match status" value="1"/>
</dbReference>
<dbReference type="Pfam" id="PF00359">
    <property type="entry name" value="PTS_EIIA_2"/>
    <property type="match status" value="1"/>
</dbReference>
<dbReference type="SUPFAM" id="SSF55804">
    <property type="entry name" value="Phoshotransferase/anion transport protein"/>
    <property type="match status" value="1"/>
</dbReference>
<dbReference type="PROSITE" id="PS51094">
    <property type="entry name" value="PTS_EIIA_TYPE_2"/>
    <property type="match status" value="1"/>
</dbReference>
<dbReference type="PROSITE" id="PS00372">
    <property type="entry name" value="PTS_EIIA_TYPE_2_HIS"/>
    <property type="match status" value="1"/>
</dbReference>
<sequence length="154" mass="17106">MKLRDSLAENNSIRLQAEANTWQEAVKIGVDLLVAADVVEPRYYQAILDGVEQFGPYFVIAPGLAMPHGRPEEGVKKTGFSLVTLKKPLEFNHEDNDPVDILITMAAVDANTHQEVGIMQIVNLFEDEANFDRLRACRTAQEVLDLIDRTNAAA</sequence>
<comment type="function">
    <text evidence="1">The phosphoenolpyruvate-dependent sugar phosphotransferase system (sugar PTS), a major carbohydrate active transport system, catalyzes the phosphorylation of incoming sugar substrates concomitantly with their translocation across the cell membrane. The enzyme II UlaABC PTS system is involved in ascorbate transport.</text>
</comment>
<comment type="subcellular location">
    <subcellularLocation>
        <location evidence="3">Cytoplasm</location>
    </subcellularLocation>
</comment>
<comment type="induction">
    <text evidence="1">Induced by L-ascorbate. Repressed by UlaR.</text>
</comment>
<comment type="domain">
    <text evidence="2">The PTS EIIA type-2 domain is phosphorylated by phospho-HPr on a histidyl residue. Then, it transfers the phosphoryl group to the PTS EIIB type-2 domain.</text>
</comment>
<organism>
    <name type="scientific">Salmonella choleraesuis (strain SC-B67)</name>
    <dbReference type="NCBI Taxonomy" id="321314"/>
    <lineage>
        <taxon>Bacteria</taxon>
        <taxon>Pseudomonadati</taxon>
        <taxon>Pseudomonadota</taxon>
        <taxon>Gammaproteobacteria</taxon>
        <taxon>Enterobacterales</taxon>
        <taxon>Enterobacteriaceae</taxon>
        <taxon>Salmonella</taxon>
    </lineage>
</organism>
<keyword id="KW-0963">Cytoplasm</keyword>
<keyword id="KW-0418">Kinase</keyword>
<keyword id="KW-0597">Phosphoprotein</keyword>
<keyword id="KW-0598">Phosphotransferase system</keyword>
<keyword id="KW-0808">Transferase</keyword>
<keyword id="KW-0813">Transport</keyword>
<evidence type="ECO:0000250" key="1">
    <source>
        <dbReference type="UniProtKB" id="P69820"/>
    </source>
</evidence>
<evidence type="ECO:0000255" key="2">
    <source>
        <dbReference type="PROSITE-ProRule" id="PRU00417"/>
    </source>
</evidence>
<evidence type="ECO:0000305" key="3"/>
<feature type="chain" id="PRO_0000230314" description="Ascorbate-specific PTS system EIIA component">
    <location>
        <begin position="1"/>
        <end position="154"/>
    </location>
</feature>
<feature type="domain" description="PTS EIIA type-2" evidence="2">
    <location>
        <begin position="6"/>
        <end position="150"/>
    </location>
</feature>
<feature type="active site" description="Tele-phosphohistidine intermediate" evidence="2">
    <location>
        <position position="68"/>
    </location>
</feature>
<feature type="modified residue" description="Phosphohistidine" evidence="1">
    <location>
        <position position="68"/>
    </location>
</feature>
<proteinExistence type="inferred from homology"/>
<gene>
    <name type="primary">ulaC</name>
    <name type="ordered locus">SCH_4259</name>
</gene>
<accession>Q57GJ7</accession>
<name>ULAC_SALCH</name>
<reference key="1">
    <citation type="journal article" date="2005" name="Nucleic Acids Res.">
        <title>The genome sequence of Salmonella enterica serovar Choleraesuis, a highly invasive and resistant zoonotic pathogen.</title>
        <authorList>
            <person name="Chiu C.-H."/>
            <person name="Tang P."/>
            <person name="Chu C."/>
            <person name="Hu S."/>
            <person name="Bao Q."/>
            <person name="Yu J."/>
            <person name="Chou Y.-Y."/>
            <person name="Wang H.-S."/>
            <person name="Lee Y.-S."/>
        </authorList>
    </citation>
    <scope>NUCLEOTIDE SEQUENCE [LARGE SCALE GENOMIC DNA]</scope>
    <source>
        <strain>SC-B67</strain>
    </source>
</reference>